<evidence type="ECO:0000250" key="1">
    <source>
        <dbReference type="UniProtKB" id="O55000"/>
    </source>
</evidence>
<evidence type="ECO:0000250" key="2">
    <source>
        <dbReference type="UniProtKB" id="Q80W00"/>
    </source>
</evidence>
<evidence type="ECO:0000250" key="3">
    <source>
        <dbReference type="UniProtKB" id="Q96QC0"/>
    </source>
</evidence>
<evidence type="ECO:0000255" key="4">
    <source>
        <dbReference type="PROSITE-ProRule" id="PRU00649"/>
    </source>
</evidence>
<evidence type="ECO:0000255" key="5">
    <source>
        <dbReference type="PROSITE-ProRule" id="PRU00723"/>
    </source>
</evidence>
<evidence type="ECO:0000256" key="6">
    <source>
        <dbReference type="SAM" id="MobiDB-lite"/>
    </source>
</evidence>
<protein>
    <recommendedName>
        <fullName>Serine/threonine-protein phosphatase 1 regulatory subunit 10</fullName>
    </recommendedName>
    <alternativeName>
        <fullName>MHC class I region proline-rich protein CAT53</fullName>
    </alternativeName>
    <alternativeName>
        <fullName>Protein FB19</fullName>
    </alternativeName>
</protein>
<organism>
    <name type="scientific">Sus scrofa</name>
    <name type="common">Pig</name>
    <dbReference type="NCBI Taxonomy" id="9823"/>
    <lineage>
        <taxon>Eukaryota</taxon>
        <taxon>Metazoa</taxon>
        <taxon>Chordata</taxon>
        <taxon>Craniata</taxon>
        <taxon>Vertebrata</taxon>
        <taxon>Euteleostomi</taxon>
        <taxon>Mammalia</taxon>
        <taxon>Eutheria</taxon>
        <taxon>Laurasiatheria</taxon>
        <taxon>Artiodactyla</taxon>
        <taxon>Suina</taxon>
        <taxon>Suidae</taxon>
        <taxon>Sus</taxon>
    </lineage>
</organism>
<proteinExistence type="inferred from homology"/>
<sequence>MGSGPIDPKELLKGLDSFLNRDGEVKSVDGISKIFSLMKEARKMVSRCTYLNILLQTRSPEILVKFIDVGGYKLLNNWLTYSKTTNNIPLLQQILLTLQHLPLTVDHLKQNNTAKLVKQLSKSSEDEELRKLASVLVSDWMAVIRSQSSTQPAEKDKKKRKEEGKSRTTPPERPLTEVKAETRAEEAPEKKREKPKSLRTTAPSHAKFRSTGLELETPSLVPVKKNASAVVVSDKYNLKPIPLKRQSSIAALGDAAPPAEKKYKPLNTTPNATKEIKVKIIPPQPMEGLGFLDALNSAPVPGIKIKKKKKVLSPTAAKPSPFEGKTSTEPSTAKPSSPEPAPPSEAMDTDRPGTPVPPVEVPELMDTASLEPGALDAKPVESPGDPSQLTRKGRKRKTVTWPEEGKLREYFYFELDETERVNVNKIKDFGEAAKREILSDRHAFETARRLSHDNMEEKVPWVCPRPLVLPSPLVTPGSNSQERYIQAEREKGILQELFLNKESPHEPDPEPYEPVPPKLIPLDEECSMDETPYVETLEPGGAGGSPDGAGGSKLPPVLANLMGSMGAGKSPQGPGGGGINVQEILTSIMGSPNSHPSEELLKQPDYSDKIKQMLVPHGLLGPGPIANGFPPGGPGGPKGMQHFPPGPGGPMPGPHGGPGGPGGPVGPRLLGPPPPPRGGDPFWDGPGDPMRGGPMRGGPGPGPGPYHRGRGGRGGNEPPPPPPPFRGARGGRSGGGPPNGRGGPGGGMVGGGGHRPHEGPGGGMSSGSGHRPHEGPGGGMGGGHRPHEGPGGGMGGGHRPHEGPGGGMGGGSGHRPHEGPGGGMGAGGGHRPHEGPGHGGPHGHRPHDVPGHRGHDHRGPPPHEHRGHDGPGHGGGGHRGHDGGHNHGGDMSKRPVCRHFMMKGNCRYENNCAFYHPGVNGPPLP</sequence>
<accession>Q767K9</accession>
<feature type="chain" id="PRO_0000071514" description="Serine/threonine-protein phosphatase 1 regulatory subunit 10">
    <location>
        <begin position="1"/>
        <end position="925"/>
    </location>
</feature>
<feature type="domain" description="TFIIS N-terminal" evidence="4">
    <location>
        <begin position="73"/>
        <end position="147"/>
    </location>
</feature>
<feature type="zinc finger region" description="C3H1-type" evidence="5">
    <location>
        <begin position="891"/>
        <end position="919"/>
    </location>
</feature>
<feature type="region of interest" description="Interaction with TOX4" evidence="2">
    <location>
        <begin position="1"/>
        <end position="348"/>
    </location>
</feature>
<feature type="region of interest" description="Disordered" evidence="6">
    <location>
        <begin position="147"/>
        <end position="211"/>
    </location>
</feature>
<feature type="region of interest" description="Disordered" evidence="6">
    <location>
        <begin position="304"/>
        <end position="398"/>
    </location>
</feature>
<feature type="region of interest" description="Necessary for interaction with PPP1CA" evidence="1">
    <location>
        <begin position="357"/>
        <end position="433"/>
    </location>
</feature>
<feature type="region of interest" description="Necessary for interaction with PPP1CC" evidence="3">
    <location>
        <begin position="393"/>
        <end position="408"/>
    </location>
</feature>
<feature type="region of interest" description="Interaction with WDR82" evidence="2">
    <location>
        <begin position="418"/>
        <end position="619"/>
    </location>
</feature>
<feature type="region of interest" description="Disordered" evidence="6">
    <location>
        <begin position="536"/>
        <end position="555"/>
    </location>
</feature>
<feature type="region of interest" description="Disordered" evidence="6">
    <location>
        <begin position="587"/>
        <end position="890"/>
    </location>
</feature>
<feature type="short sequence motif" description="PP1-binding motif" evidence="1">
    <location>
        <begin position="394"/>
        <end position="423"/>
    </location>
</feature>
<feature type="compositionally biased region" description="Basic and acidic residues" evidence="6">
    <location>
        <begin position="153"/>
        <end position="166"/>
    </location>
</feature>
<feature type="compositionally biased region" description="Basic and acidic residues" evidence="6">
    <location>
        <begin position="174"/>
        <end position="196"/>
    </location>
</feature>
<feature type="compositionally biased region" description="Low complexity" evidence="6">
    <location>
        <begin position="325"/>
        <end position="336"/>
    </location>
</feature>
<feature type="compositionally biased region" description="Gly residues" evidence="6">
    <location>
        <begin position="540"/>
        <end position="551"/>
    </location>
</feature>
<feature type="compositionally biased region" description="Basic and acidic residues" evidence="6">
    <location>
        <begin position="596"/>
        <end position="611"/>
    </location>
</feature>
<feature type="compositionally biased region" description="Pro residues" evidence="6">
    <location>
        <begin position="644"/>
        <end position="655"/>
    </location>
</feature>
<feature type="compositionally biased region" description="Gly residues" evidence="6">
    <location>
        <begin position="656"/>
        <end position="665"/>
    </location>
</feature>
<feature type="compositionally biased region" description="Low complexity" evidence="6">
    <location>
        <begin position="679"/>
        <end position="693"/>
    </location>
</feature>
<feature type="compositionally biased region" description="Gly residues" evidence="6">
    <location>
        <begin position="728"/>
        <end position="766"/>
    </location>
</feature>
<feature type="compositionally biased region" description="Gly residues" evidence="6">
    <location>
        <begin position="775"/>
        <end position="829"/>
    </location>
</feature>
<feature type="compositionally biased region" description="Basic and acidic residues" evidence="6">
    <location>
        <begin position="846"/>
        <end position="871"/>
    </location>
</feature>
<feature type="compositionally biased region" description="Basic and acidic residues" evidence="6">
    <location>
        <begin position="879"/>
        <end position="890"/>
    </location>
</feature>
<feature type="modified residue" description="Phosphoserine" evidence="3">
    <location>
        <position position="313"/>
    </location>
</feature>
<feature type="modified residue" description="Phosphoserine" evidence="3">
    <location>
        <position position="382"/>
    </location>
</feature>
<feature type="modified residue" description="Phosphothreonine; by PKA" evidence="1">
    <location>
        <position position="398"/>
    </location>
</feature>
<feature type="modified residue" description="Phosphoserine" evidence="3">
    <location>
        <position position="545"/>
    </location>
</feature>
<feature type="modified residue" description="Phosphoserine" evidence="3">
    <location>
        <position position="591"/>
    </location>
</feature>
<feature type="modified residue" description="Omega-N-methylarginine" evidence="3">
    <location>
        <position position="668"/>
    </location>
</feature>
<feature type="modified residue" description="Omega-N-methylarginine" evidence="3">
    <location>
        <position position="696"/>
    </location>
</feature>
<feature type="modified residue" description="Omega-N-methylarginine" evidence="2">
    <location>
        <position position="741"/>
    </location>
</feature>
<feature type="cross-link" description="Glycyl lysine isopeptide (Lys-Gly) (interchain with G-Cter in SUMO2)" evidence="3">
    <location>
        <position position="179"/>
    </location>
</feature>
<feature type="cross-link" description="Glycyl lysine isopeptide (Lys-Gly) (interchain with G-Cter in SUMO2)" evidence="3">
    <location>
        <position position="262"/>
    </location>
</feature>
<dbReference type="EMBL" id="AB113357">
    <property type="protein sequence ID" value="BAD08440.1"/>
    <property type="molecule type" value="Genomic_DNA"/>
</dbReference>
<dbReference type="RefSeq" id="NP_001116637.1">
    <property type="nucleotide sequence ID" value="NM_001123165.1"/>
</dbReference>
<dbReference type="RefSeq" id="XP_005653508.1">
    <property type="nucleotide sequence ID" value="XM_005653451.3"/>
</dbReference>
<dbReference type="RefSeq" id="XP_005653509.1">
    <property type="nucleotide sequence ID" value="XM_005653452.3"/>
</dbReference>
<dbReference type="RefSeq" id="XP_013852018.1">
    <property type="nucleotide sequence ID" value="XM_013996564.2"/>
</dbReference>
<dbReference type="RefSeq" id="XP_020953574.1">
    <property type="nucleotide sequence ID" value="XM_021097915.1"/>
</dbReference>
<dbReference type="RefSeq" id="XP_020953575.1">
    <property type="nucleotide sequence ID" value="XM_021097916.1"/>
</dbReference>
<dbReference type="RefSeq" id="XP_020953576.1">
    <property type="nucleotide sequence ID" value="XM_021097917.1"/>
</dbReference>
<dbReference type="BMRB" id="Q767K9"/>
<dbReference type="SMR" id="Q767K9"/>
<dbReference type="FunCoup" id="Q767K9">
    <property type="interactions" value="2306"/>
</dbReference>
<dbReference type="STRING" id="9823.ENSSSCP00000030807"/>
<dbReference type="GlyGen" id="Q767K9">
    <property type="glycosylation" value="1 site"/>
</dbReference>
<dbReference type="PaxDb" id="9823-ENSSSCP00000030807"/>
<dbReference type="PeptideAtlas" id="Q767K9"/>
<dbReference type="Ensembl" id="ENSSSCT00000034462.4">
    <property type="protein sequence ID" value="ENSSSCP00000030807.1"/>
    <property type="gene ID" value="ENSSSCG00000001347.6"/>
</dbReference>
<dbReference type="Ensembl" id="ENSSSCT00000107719.1">
    <property type="protein sequence ID" value="ENSSSCP00000082109.1"/>
    <property type="gene ID" value="ENSSSCG00000001347.6"/>
</dbReference>
<dbReference type="Ensembl" id="ENSSSCT00015044433.1">
    <property type="protein sequence ID" value="ENSSSCP00015017555.1"/>
    <property type="gene ID" value="ENSSSCG00015033554.1"/>
</dbReference>
<dbReference type="Ensembl" id="ENSSSCT00015044482.1">
    <property type="protein sequence ID" value="ENSSSCP00015017576.1"/>
    <property type="gene ID" value="ENSSSCG00015033554.1"/>
</dbReference>
<dbReference type="Ensembl" id="ENSSSCT00015044662.1">
    <property type="protein sequence ID" value="ENSSSCP00015017662.1"/>
    <property type="gene ID" value="ENSSSCG00015033554.1"/>
</dbReference>
<dbReference type="Ensembl" id="ENSSSCT00015044827.1">
    <property type="protein sequence ID" value="ENSSSCP00015017739.1"/>
    <property type="gene ID" value="ENSSSCG00015033554.1"/>
</dbReference>
<dbReference type="Ensembl" id="ENSSSCT00030086221.1">
    <property type="protein sequence ID" value="ENSSSCP00030039756.1"/>
    <property type="gene ID" value="ENSSSCG00030061672.1"/>
</dbReference>
<dbReference type="Ensembl" id="ENSSSCT00035085784.1">
    <property type="protein sequence ID" value="ENSSSCP00035035710.1"/>
    <property type="gene ID" value="ENSSSCG00035063785.1"/>
</dbReference>
<dbReference type="Ensembl" id="ENSSSCT00040097159.1">
    <property type="protein sequence ID" value="ENSSSCP00040043298.1"/>
    <property type="gene ID" value="ENSSSCG00040070742.1"/>
</dbReference>
<dbReference type="Ensembl" id="ENSSSCT00045068536.1">
    <property type="protein sequence ID" value="ENSSSCP00045048772.1"/>
    <property type="gene ID" value="ENSSSCG00045039371.1"/>
</dbReference>
<dbReference type="Ensembl" id="ENSSSCT00055061061.1">
    <property type="protein sequence ID" value="ENSSSCP00055048952.1"/>
    <property type="gene ID" value="ENSSSCG00055030634.1"/>
</dbReference>
<dbReference type="Ensembl" id="ENSSSCT00060069516.1">
    <property type="protein sequence ID" value="ENSSSCP00060029940.1"/>
    <property type="gene ID" value="ENSSSCG00060051078.1"/>
</dbReference>
<dbReference type="Ensembl" id="ENSSSCT00085022567">
    <property type="protein sequence ID" value="ENSSSCP00085015578"/>
    <property type="gene ID" value="ENSSSCG00085012011"/>
</dbReference>
<dbReference type="Ensembl" id="ENSSSCT00090030668">
    <property type="protein sequence ID" value="ENSSSCP00090019053"/>
    <property type="gene ID" value="ENSSSCG00090017366"/>
</dbReference>
<dbReference type="Ensembl" id="ENSSSCT00105033319">
    <property type="protein sequence ID" value="ENSSSCP00105023251"/>
    <property type="gene ID" value="ENSSSCG00105017332"/>
</dbReference>
<dbReference type="Ensembl" id="ENSSSCT00110039832">
    <property type="protein sequence ID" value="ENSSSCP00110027665"/>
    <property type="gene ID" value="ENSSSCG00110020698"/>
</dbReference>
<dbReference type="Ensembl" id="ENSSSCT00115014509">
    <property type="protein sequence ID" value="ENSSSCP00115013706"/>
    <property type="gene ID" value="ENSSSCG00115008296"/>
</dbReference>
<dbReference type="Ensembl" id="ENSSSCT00130038962">
    <property type="protein sequence ID" value="ENSSSCP00130027381"/>
    <property type="gene ID" value="ENSSSCG00130020107"/>
</dbReference>
<dbReference type="GeneID" id="100144450"/>
<dbReference type="KEGG" id="ssc:100144450"/>
<dbReference type="CTD" id="5514"/>
<dbReference type="VGNC" id="VGNC:91717">
    <property type="gene designation" value="PPP1R10"/>
</dbReference>
<dbReference type="eggNOG" id="ENOG502QQ2I">
    <property type="taxonomic scope" value="Eukaryota"/>
</dbReference>
<dbReference type="GeneTree" id="ENSGT00940000159263"/>
<dbReference type="HOGENOM" id="CLU_019410_0_0_1"/>
<dbReference type="InParanoid" id="Q767K9"/>
<dbReference type="OMA" id="NGPPQIW"/>
<dbReference type="OrthoDB" id="2138378at2759"/>
<dbReference type="TreeFam" id="TF105541"/>
<dbReference type="Proteomes" id="UP000008227">
    <property type="component" value="Chromosome 7"/>
</dbReference>
<dbReference type="Proteomes" id="UP000314985">
    <property type="component" value="Unplaced"/>
</dbReference>
<dbReference type="Proteomes" id="UP000694570">
    <property type="component" value="Unplaced"/>
</dbReference>
<dbReference type="Proteomes" id="UP000694571">
    <property type="component" value="Unplaced"/>
</dbReference>
<dbReference type="Proteomes" id="UP000694720">
    <property type="component" value="Unplaced"/>
</dbReference>
<dbReference type="Proteomes" id="UP000694722">
    <property type="component" value="Unplaced"/>
</dbReference>
<dbReference type="Proteomes" id="UP000694723">
    <property type="component" value="Unplaced"/>
</dbReference>
<dbReference type="Proteomes" id="UP000694724">
    <property type="component" value="Unplaced"/>
</dbReference>
<dbReference type="Proteomes" id="UP000694725">
    <property type="component" value="Unplaced"/>
</dbReference>
<dbReference type="Proteomes" id="UP000694726">
    <property type="component" value="Unplaced"/>
</dbReference>
<dbReference type="Proteomes" id="UP000694727">
    <property type="component" value="Unplaced"/>
</dbReference>
<dbReference type="Proteomes" id="UP000694728">
    <property type="component" value="Unplaced"/>
</dbReference>
<dbReference type="Bgee" id="ENSSSCG00000001347">
    <property type="expression patterns" value="Expressed in granulosa cell and 42 other cell types or tissues"/>
</dbReference>
<dbReference type="GO" id="GO:0000785">
    <property type="term" value="C:chromatin"/>
    <property type="evidence" value="ECO:0000250"/>
    <property type="project" value="UniProtKB"/>
</dbReference>
<dbReference type="GO" id="GO:0005634">
    <property type="term" value="C:nucleus"/>
    <property type="evidence" value="ECO:0007669"/>
    <property type="project" value="UniProtKB-SubCell"/>
</dbReference>
<dbReference type="GO" id="GO:0072357">
    <property type="term" value="C:PTW/PP1 phosphatase complex"/>
    <property type="evidence" value="ECO:0000250"/>
    <property type="project" value="UniProtKB"/>
</dbReference>
<dbReference type="GO" id="GO:0003677">
    <property type="term" value="F:DNA binding"/>
    <property type="evidence" value="ECO:0007669"/>
    <property type="project" value="UniProtKB-KW"/>
</dbReference>
<dbReference type="GO" id="GO:0140767">
    <property type="term" value="F:enzyme-substrate adaptor activity"/>
    <property type="evidence" value="ECO:0000250"/>
    <property type="project" value="UniProtKB"/>
</dbReference>
<dbReference type="GO" id="GO:0008157">
    <property type="term" value="F:protein phosphatase 1 binding"/>
    <property type="evidence" value="ECO:0000318"/>
    <property type="project" value="GO_Central"/>
</dbReference>
<dbReference type="GO" id="GO:0004864">
    <property type="term" value="F:protein phosphatase inhibitor activity"/>
    <property type="evidence" value="ECO:0007669"/>
    <property type="project" value="UniProtKB-KW"/>
</dbReference>
<dbReference type="GO" id="GO:0019888">
    <property type="term" value="F:protein phosphatase regulator activity"/>
    <property type="evidence" value="ECO:0000250"/>
    <property type="project" value="UniProtKB"/>
</dbReference>
<dbReference type="GO" id="GO:0003723">
    <property type="term" value="F:RNA binding"/>
    <property type="evidence" value="ECO:0007669"/>
    <property type="project" value="UniProtKB-KW"/>
</dbReference>
<dbReference type="GO" id="GO:0008270">
    <property type="term" value="F:zinc ion binding"/>
    <property type="evidence" value="ECO:0007669"/>
    <property type="project" value="UniProtKB-KW"/>
</dbReference>
<dbReference type="GO" id="GO:0034244">
    <property type="term" value="P:negative regulation of transcription elongation by RNA polymerase II"/>
    <property type="evidence" value="ECO:0000250"/>
    <property type="project" value="UniProtKB"/>
</dbReference>
<dbReference type="GO" id="GO:2000806">
    <property type="term" value="P:positive regulation of termination of RNA polymerase II transcription, poly(A)-coupled"/>
    <property type="evidence" value="ECO:0000250"/>
    <property type="project" value="UniProtKB"/>
</dbReference>
<dbReference type="GO" id="GO:0032968">
    <property type="term" value="P:positive regulation of transcription elongation by RNA polymerase II"/>
    <property type="evidence" value="ECO:0000250"/>
    <property type="project" value="UniProtKB"/>
</dbReference>
<dbReference type="GO" id="GO:0001111">
    <property type="term" value="P:RNA polymerase II promoter clearance"/>
    <property type="evidence" value="ECO:0000250"/>
    <property type="project" value="UniProtKB"/>
</dbReference>
<dbReference type="CDD" id="cd00183">
    <property type="entry name" value="TFIIS_I"/>
    <property type="match status" value="1"/>
</dbReference>
<dbReference type="FunFam" id="1.20.930.10:FF:000006">
    <property type="entry name" value="Serine/threonine-protein phosphatase 1 regulatory subunit 10"/>
    <property type="match status" value="1"/>
</dbReference>
<dbReference type="Gene3D" id="1.20.930.10">
    <property type="entry name" value="Conserved domain common to transcription factors TFIIS, elongin A, CRSP70"/>
    <property type="match status" value="1"/>
</dbReference>
<dbReference type="Gene3D" id="4.10.1000.10">
    <property type="entry name" value="Zinc finger, CCCH-type"/>
    <property type="match status" value="1"/>
</dbReference>
<dbReference type="InterPro" id="IPR003617">
    <property type="entry name" value="TFIIS/CRSP70_N_sub"/>
</dbReference>
<dbReference type="InterPro" id="IPR035441">
    <property type="entry name" value="TFIIS/LEDGF_dom_sf"/>
</dbReference>
<dbReference type="InterPro" id="IPR017923">
    <property type="entry name" value="TFIIS_N"/>
</dbReference>
<dbReference type="InterPro" id="IPR000571">
    <property type="entry name" value="Znf_CCCH"/>
</dbReference>
<dbReference type="InterPro" id="IPR036855">
    <property type="entry name" value="Znf_CCCH_sf"/>
</dbReference>
<dbReference type="PANTHER" id="PTHR46557">
    <property type="entry name" value="SERINE/THREONINE-PROTEIN PHOSPHATASE 1 REGULATORY SUBUNIT 10-RELATED"/>
    <property type="match status" value="1"/>
</dbReference>
<dbReference type="PANTHER" id="PTHR46557:SF1">
    <property type="entry name" value="SERINE_THREONINE-PROTEIN PHOSPHATASE 1 REGULATORY SUBUNIT 10"/>
    <property type="match status" value="1"/>
</dbReference>
<dbReference type="Pfam" id="PF08711">
    <property type="entry name" value="Med26"/>
    <property type="match status" value="1"/>
</dbReference>
<dbReference type="Pfam" id="PF00642">
    <property type="entry name" value="zf-CCCH"/>
    <property type="match status" value="1"/>
</dbReference>
<dbReference type="SMART" id="SM00509">
    <property type="entry name" value="TFS2N"/>
    <property type="match status" value="1"/>
</dbReference>
<dbReference type="SMART" id="SM00356">
    <property type="entry name" value="ZnF_C3H1"/>
    <property type="match status" value="1"/>
</dbReference>
<dbReference type="SUPFAM" id="SSF90229">
    <property type="entry name" value="CCCH zinc finger"/>
    <property type="match status" value="1"/>
</dbReference>
<dbReference type="SUPFAM" id="SSF47676">
    <property type="entry name" value="Conserved domain common to transcription factors TFIIS, elongin A, CRSP70"/>
    <property type="match status" value="1"/>
</dbReference>
<dbReference type="PROSITE" id="PS51319">
    <property type="entry name" value="TFIIS_N"/>
    <property type="match status" value="1"/>
</dbReference>
<dbReference type="PROSITE" id="PS50103">
    <property type="entry name" value="ZF_C3H1"/>
    <property type="match status" value="1"/>
</dbReference>
<name>PP1RA_PIG</name>
<gene>
    <name type="primary">PPP1R10</name>
    <name type="synonym">CAT53</name>
    <name type="synonym">FB19</name>
</gene>
<comment type="function">
    <text evidence="2 3">Substrate-recognition component of the PNUTS-PP1 protein phosphatase complex, a protein phosphatase 1 (PP1) complex that promotes RNA polymerase II transcription pause-release, allowing transcription elongation. Promoter-proximal pausing by RNA polymerase II is a transcription halt following transcription initiation but prior to elongation, which acts as a checkpoint to control that transcripts are favorably configured for transcriptional elongation. The PNUTS-PP1 complex mediates the release of RNA polymerase II from promoter-proximal region of genes by catalyzing dephosphorylation of proteins involved in transcription, such as AFF4, CDK9, MEPCE, INTS12, NCBP1, POLR2M/GDOWN1 and SUPT6H. The PNUTS-PP1 complex also regulates RNA polymerase II transcription termination by mediating dephosphorylation of SUPT5H in termination zones downstream of poly(A) sites, thereby promoting deceleration of RNA polymerase II transcription. PNUTS-PP1 complex is also involved in the response to replication stress by mediating dephosphorylation of POLR2A at 'Ser-5' of the CTD, promoting RNA polymerase II degradation (By similarity). The PNUTS-PP1 complex also plays a role in the control of chromatin structure and cell cycle progression during the transition from mitosis into interphase (By similarity). PNUTS-PP1 complex mediates dephosphorylation of MYC, promoting MYC stability by preventing MYC ubiquitination by the SCF(FBXW7) complex. In addition to acts as a substrate-recognition component, PPP1R10/PNUTS also acts as a nuclear targeting subunit for the PNUTS-PP1 complex. In some context, PPP1R10/PNUTS also acts as an inhibitor of protein phosphatase 1 (PP1) activity by preventing access to substrates, such as RB (By similarity).</text>
</comment>
<comment type="subunit">
    <text evidence="3">Component of the PNUTS-PP1 complex (also named PTW/PP1 complex), composed of PPP1R10/PNUTS, TOX4, WDR82, and PPP1CA (or PPP1CB or PPP1CC).</text>
</comment>
<comment type="subcellular location">
    <subcellularLocation>
        <location evidence="3 4">Nucleus</location>
    </subcellularLocation>
    <subcellularLocation>
        <location evidence="3">Chromosome</location>
    </subcellularLocation>
    <text evidence="2 3">Found in discrete nucleoplasmic bodies and within nucleoli. Associates with RNA polymerase II (Pol II) on chromatin during pause-release checkpoint (By similarity). Associates with chromatin during interphase, excluded from condensed chromosomes during early mitosis and is reloaded onto chromosomes at the late telophase (By similarity).</text>
</comment>
<comment type="domain">
    <text evidence="3">The TFIIS N-terminal domain specifically recognizes disordered sequences in protein substrates that are then dephosphorylated by PPP1CA (or PPP1CB or PPP1CC).</text>
</comment>
<comment type="PTM">
    <text evidence="1">Phosphorylated on Ser-398 by PKA within the region necessary for interaction with PPP1CA.</text>
</comment>
<keyword id="KW-0158">Chromosome</keyword>
<keyword id="KW-0238">DNA-binding</keyword>
<keyword id="KW-1017">Isopeptide bond</keyword>
<keyword id="KW-0479">Metal-binding</keyword>
<keyword id="KW-0488">Methylation</keyword>
<keyword id="KW-0539">Nucleus</keyword>
<keyword id="KW-0597">Phosphoprotein</keyword>
<keyword id="KW-1185">Reference proteome</keyword>
<keyword id="KW-0694">RNA-binding</keyword>
<keyword id="KW-0832">Ubl conjugation</keyword>
<keyword id="KW-0862">Zinc</keyword>
<keyword id="KW-0863">Zinc-finger</keyword>
<reference key="1">
    <citation type="journal article" date="2004" name="Immunogenetics">
        <title>Nucleotide sequencing analysis of the swine 433-kb genomic segment located between the non-classical and classical SLA class I gene clusters.</title>
        <authorList>
            <person name="Shigenari A."/>
            <person name="Ando A."/>
            <person name="Renard C."/>
            <person name="Chardon P."/>
            <person name="Shiina T."/>
            <person name="Kulski J.K."/>
            <person name="Yasue H."/>
            <person name="Inoko H."/>
        </authorList>
    </citation>
    <scope>NUCLEOTIDE SEQUENCE [LARGE SCALE GENOMIC DNA]</scope>
</reference>